<gene>
    <name evidence="1" type="primary">alc</name>
    <name type="ordered locus">SAV_1995</name>
</gene>
<keyword id="KW-0378">Hydrolase</keyword>
<keyword id="KW-0659">Purine metabolism</keyword>
<keyword id="KW-1185">Reference proteome</keyword>
<reference key="1">
    <citation type="journal article" date="2001" name="Proc. Natl. Acad. Sci. U.S.A.">
        <title>Genome sequence of an industrial microorganism Streptomyces avermitilis: deducing the ability of producing secondary metabolites.</title>
        <authorList>
            <person name="Omura S."/>
            <person name="Ikeda H."/>
            <person name="Ishikawa J."/>
            <person name="Hanamoto A."/>
            <person name="Takahashi C."/>
            <person name="Shinose M."/>
            <person name="Takahashi Y."/>
            <person name="Horikawa H."/>
            <person name="Nakazawa H."/>
            <person name="Osonoe T."/>
            <person name="Kikuchi H."/>
            <person name="Shiba T."/>
            <person name="Sakaki Y."/>
            <person name="Hattori M."/>
        </authorList>
    </citation>
    <scope>NUCLEOTIDE SEQUENCE [LARGE SCALE GENOMIC DNA]</scope>
    <source>
        <strain>ATCC 31267 / DSM 46492 / JCM 5070 / NBRC 14893 / NCIMB 12804 / NRRL 8165 / MA-4680</strain>
    </source>
</reference>
<reference key="2">
    <citation type="journal article" date="2003" name="Nat. Biotechnol.">
        <title>Complete genome sequence and comparative analysis of the industrial microorganism Streptomyces avermitilis.</title>
        <authorList>
            <person name="Ikeda H."/>
            <person name="Ishikawa J."/>
            <person name="Hanamoto A."/>
            <person name="Shinose M."/>
            <person name="Kikuchi H."/>
            <person name="Shiba T."/>
            <person name="Sakaki Y."/>
            <person name="Hattori M."/>
            <person name="Omura S."/>
        </authorList>
    </citation>
    <scope>NUCLEOTIDE SEQUENCE [LARGE SCALE GENOMIC DNA]</scope>
    <source>
        <strain>ATCC 31267 / DSM 46492 / JCM 5070 / NBRC 14893 / NCIMB 12804 / NRRL 8165 / MA-4680</strain>
    </source>
</reference>
<accession>Q82LL5</accession>
<organism>
    <name type="scientific">Streptomyces avermitilis (strain ATCC 31267 / DSM 46492 / JCM 5070 / NBRC 14893 / NCIMB 12804 / NRRL 8165 / MA-4680)</name>
    <dbReference type="NCBI Taxonomy" id="227882"/>
    <lineage>
        <taxon>Bacteria</taxon>
        <taxon>Bacillati</taxon>
        <taxon>Actinomycetota</taxon>
        <taxon>Actinomycetes</taxon>
        <taxon>Kitasatosporales</taxon>
        <taxon>Streptomycetaceae</taxon>
        <taxon>Streptomyces</taxon>
    </lineage>
</organism>
<comment type="catalytic activity">
    <reaction evidence="1">
        <text>allantoate + H2O = (S)-ureidoglycolate + urea</text>
        <dbReference type="Rhea" id="RHEA:11016"/>
        <dbReference type="ChEBI" id="CHEBI:15377"/>
        <dbReference type="ChEBI" id="CHEBI:16199"/>
        <dbReference type="ChEBI" id="CHEBI:17536"/>
        <dbReference type="ChEBI" id="CHEBI:57296"/>
        <dbReference type="EC" id="3.5.3.4"/>
    </reaction>
</comment>
<comment type="pathway">
    <text evidence="1">Nitrogen metabolism; (S)-allantoin degradation; (S)-ureidoglycolate from allantoate (aminidohydrolase route): step 1/1.</text>
</comment>
<comment type="similarity">
    <text evidence="1">Belongs to the allantoicase family.</text>
</comment>
<sequence length="376" mass="41076">MTAQHPSPSARFTGDANPYGGGDPYADYRTADFPFTQYANLADRQLGAGVIAANDEFFAQRENLLVAGRAEFDPEHFGHKGKIMDGWETRRRRGASAAHPWPTAEDHDWALVRLGAPGVVRGVVVDTAHFRGNYPQAVSVEGASVPGSPSPEELLAGDVKWMTLVPRTAVGGHAANGFEVSVEQRFTHLRVNQHPDGGIARLRVYGEAVPDPVWLAALGTFDVVALENGGRVEDASNLFYSPATNTIQPGRSRQMDDGWETRRRRDHGNDWIRYQLVARSEIRAIEIDTAYLKGNSAGWAAVSVKDGESGEWTEILPRTRLQPDTNHRFTLAAPVAGTHARVDIFPDGGISRLRLFGSLTEEGAARLTARYQELGG</sequence>
<feature type="chain" id="PRO_0000205928" description="Probable allantoicase">
    <location>
        <begin position="1"/>
        <end position="376"/>
    </location>
</feature>
<dbReference type="EC" id="3.5.3.4" evidence="1"/>
<dbReference type="EMBL" id="BA000030">
    <property type="protein sequence ID" value="BAC69706.1"/>
    <property type="molecule type" value="Genomic_DNA"/>
</dbReference>
<dbReference type="RefSeq" id="WP_010983435.1">
    <property type="nucleotide sequence ID" value="NZ_JZJK01000086.1"/>
</dbReference>
<dbReference type="SMR" id="Q82LL5"/>
<dbReference type="GeneID" id="41539096"/>
<dbReference type="KEGG" id="sma:SAVERM_1995"/>
<dbReference type="eggNOG" id="COG4266">
    <property type="taxonomic scope" value="Bacteria"/>
</dbReference>
<dbReference type="HOGENOM" id="CLU_038797_1_0_11"/>
<dbReference type="OrthoDB" id="2078334at2"/>
<dbReference type="UniPathway" id="UPA00395">
    <property type="reaction ID" value="UER00654"/>
</dbReference>
<dbReference type="Proteomes" id="UP000000428">
    <property type="component" value="Chromosome"/>
</dbReference>
<dbReference type="GO" id="GO:0004037">
    <property type="term" value="F:allantoicase activity"/>
    <property type="evidence" value="ECO:0007669"/>
    <property type="project" value="UniProtKB-UniRule"/>
</dbReference>
<dbReference type="GO" id="GO:0000256">
    <property type="term" value="P:allantoin catabolic process"/>
    <property type="evidence" value="ECO:0007669"/>
    <property type="project" value="UniProtKB-UniRule"/>
</dbReference>
<dbReference type="GO" id="GO:0006144">
    <property type="term" value="P:purine nucleobase metabolic process"/>
    <property type="evidence" value="ECO:0007669"/>
    <property type="project" value="UniProtKB-KW"/>
</dbReference>
<dbReference type="Gene3D" id="2.60.120.260">
    <property type="entry name" value="Galactose-binding domain-like"/>
    <property type="match status" value="2"/>
</dbReference>
<dbReference type="HAMAP" id="MF_00813">
    <property type="entry name" value="Allantoicase"/>
    <property type="match status" value="1"/>
</dbReference>
<dbReference type="InterPro" id="IPR005164">
    <property type="entry name" value="Allantoicase"/>
</dbReference>
<dbReference type="InterPro" id="IPR015908">
    <property type="entry name" value="Allantoicase_dom"/>
</dbReference>
<dbReference type="InterPro" id="IPR008979">
    <property type="entry name" value="Galactose-bd-like_sf"/>
</dbReference>
<dbReference type="NCBIfam" id="TIGR02961">
    <property type="entry name" value="allantoicase"/>
    <property type="match status" value="1"/>
</dbReference>
<dbReference type="PANTHER" id="PTHR12045">
    <property type="entry name" value="ALLANTOICASE"/>
    <property type="match status" value="1"/>
</dbReference>
<dbReference type="PANTHER" id="PTHR12045:SF3">
    <property type="entry name" value="INACTIVE ALLANTOICASE-RELATED"/>
    <property type="match status" value="1"/>
</dbReference>
<dbReference type="Pfam" id="PF03561">
    <property type="entry name" value="Allantoicase"/>
    <property type="match status" value="2"/>
</dbReference>
<dbReference type="PIRSF" id="PIRSF016516">
    <property type="entry name" value="Allantoicase"/>
    <property type="match status" value="1"/>
</dbReference>
<dbReference type="SUPFAM" id="SSF49785">
    <property type="entry name" value="Galactose-binding domain-like"/>
    <property type="match status" value="2"/>
</dbReference>
<name>ALLC_STRAW</name>
<evidence type="ECO:0000255" key="1">
    <source>
        <dbReference type="HAMAP-Rule" id="MF_00813"/>
    </source>
</evidence>
<protein>
    <recommendedName>
        <fullName evidence="1">Probable allantoicase</fullName>
        <ecNumber evidence="1">3.5.3.4</ecNumber>
    </recommendedName>
    <alternativeName>
        <fullName evidence="1">Allantoate amidinohydrolase</fullName>
    </alternativeName>
</protein>
<proteinExistence type="inferred from homology"/>